<sequence>MQAYESGDERGLIYGYVLNGRGGGRRVGRNQIAVLDLLPEESLWLHWDRGVPEAQAWLRDSAGLSEFACDLLLEEATRPRLLDLGAESLLVFLRGVNLNPGAEPEDMVSLRVFADARRVISLRLRPLKAVADLLEDLEAGKGPKTASEVVYYLAHYLTDRVDTLISGIADQLDAVEELVEADERASPDQHQLRTLRRRSAGLRRYLAPQRDIYSQLARYKLSWFVEDDADYWNELNNRLTRNLEELELIRERISVLQEAESRRITERMNRTMYLLGIITGFFLPMSFVTGLLGINVGGIPGADAPHGFWLACLLIGGVATFQWWVFRRLRWL</sequence>
<keyword id="KW-0002">3D-structure</keyword>
<keyword id="KW-0104">Cadmium</keyword>
<keyword id="KW-0997">Cell inner membrane</keyword>
<keyword id="KW-1003">Cell membrane</keyword>
<keyword id="KW-0170">Cobalt</keyword>
<keyword id="KW-0171">Cobalt transport</keyword>
<keyword id="KW-0406">Ion transport</keyword>
<keyword id="KW-0472">Membrane</keyword>
<keyword id="KW-0533">Nickel</keyword>
<keyword id="KW-0921">Nickel transport</keyword>
<keyword id="KW-1185">Reference proteome</keyword>
<keyword id="KW-0812">Transmembrane</keyword>
<keyword id="KW-1133">Transmembrane helix</keyword>
<keyword id="KW-0813">Transport</keyword>
<keyword id="KW-0862">Zinc</keyword>
<keyword id="KW-0864">Zinc transport</keyword>
<dbReference type="EMBL" id="AF027290">
    <property type="protein sequence ID" value="AAD11565.1"/>
    <property type="molecule type" value="Genomic_DNA"/>
</dbReference>
<dbReference type="EMBL" id="AE004091">
    <property type="protein sequence ID" value="AAG05162.1"/>
    <property type="molecule type" value="Genomic_DNA"/>
</dbReference>
<dbReference type="PIR" id="C83423">
    <property type="entry name" value="C83423"/>
</dbReference>
<dbReference type="RefSeq" id="NP_250464.1">
    <property type="nucleotide sequence ID" value="NC_002516.2"/>
</dbReference>
<dbReference type="RefSeq" id="WP_003098062.1">
    <property type="nucleotide sequence ID" value="NZ_QZGE01000003.1"/>
</dbReference>
<dbReference type="PDB" id="7NH9">
    <property type="method" value="EM"/>
    <property type="resolution" value="3.03 A"/>
    <property type="chains" value="A/B/C/D/E=1-332"/>
</dbReference>
<dbReference type="PDBsum" id="7NH9"/>
<dbReference type="EMDB" id="EMD-12321"/>
<dbReference type="SMR" id="Q9ZIH2"/>
<dbReference type="STRING" id="208964.PA1773"/>
<dbReference type="PaxDb" id="208964-PA1773"/>
<dbReference type="GeneID" id="880766"/>
<dbReference type="KEGG" id="pae:PA1773"/>
<dbReference type="PATRIC" id="fig|208964.12.peg.1838"/>
<dbReference type="PseudoCAP" id="PA1773"/>
<dbReference type="eggNOG" id="COG0598">
    <property type="taxonomic scope" value="Bacteria"/>
</dbReference>
<dbReference type="HOGENOM" id="CLU_007127_2_0_6"/>
<dbReference type="InParanoid" id="G3XD00"/>
<dbReference type="OMA" id="MVSVRIF"/>
<dbReference type="OrthoDB" id="9803484at2"/>
<dbReference type="PhylomeDB" id="G3XD00"/>
<dbReference type="Proteomes" id="UP000002438">
    <property type="component" value="Chromosome"/>
</dbReference>
<dbReference type="GO" id="GO:0005886">
    <property type="term" value="C:plasma membrane"/>
    <property type="evidence" value="ECO:0007669"/>
    <property type="project" value="UniProtKB-SubCell"/>
</dbReference>
<dbReference type="GO" id="GO:0046873">
    <property type="term" value="F:metal ion transmembrane transporter activity"/>
    <property type="evidence" value="ECO:0007669"/>
    <property type="project" value="InterPro"/>
</dbReference>
<dbReference type="GO" id="GO:0006824">
    <property type="term" value="P:cobalt ion transport"/>
    <property type="evidence" value="ECO:0007669"/>
    <property type="project" value="UniProtKB-KW"/>
</dbReference>
<dbReference type="GO" id="GO:0015675">
    <property type="term" value="P:nickel cation transport"/>
    <property type="evidence" value="ECO:0007669"/>
    <property type="project" value="UniProtKB-KW"/>
</dbReference>
<dbReference type="GO" id="GO:0006829">
    <property type="term" value="P:zinc ion transport"/>
    <property type="evidence" value="ECO:0007669"/>
    <property type="project" value="UniProtKB-KW"/>
</dbReference>
<dbReference type="CDD" id="cd12833">
    <property type="entry name" value="ZntB-like_1"/>
    <property type="match status" value="1"/>
</dbReference>
<dbReference type="Gene3D" id="3.30.460.20">
    <property type="entry name" value="CorA soluble domain-like"/>
    <property type="match status" value="1"/>
</dbReference>
<dbReference type="Gene3D" id="1.20.58.340">
    <property type="entry name" value="Magnesium transport protein CorA, transmembrane region"/>
    <property type="match status" value="2"/>
</dbReference>
<dbReference type="InterPro" id="IPR045861">
    <property type="entry name" value="CorA_cytoplasmic_dom"/>
</dbReference>
<dbReference type="InterPro" id="IPR045863">
    <property type="entry name" value="CorA_TM1_TM2"/>
</dbReference>
<dbReference type="InterPro" id="IPR002523">
    <property type="entry name" value="MgTranspt_CorA/ZnTranspt_ZntB"/>
</dbReference>
<dbReference type="PANTHER" id="PTHR46494">
    <property type="entry name" value="CORA FAMILY METAL ION TRANSPORTER (EUROFUNG)"/>
    <property type="match status" value="1"/>
</dbReference>
<dbReference type="PANTHER" id="PTHR46494:SF3">
    <property type="entry name" value="ZINC TRANSPORT PROTEIN ZNTB"/>
    <property type="match status" value="1"/>
</dbReference>
<dbReference type="Pfam" id="PF01544">
    <property type="entry name" value="CorA"/>
    <property type="match status" value="1"/>
</dbReference>
<dbReference type="SUPFAM" id="SSF143865">
    <property type="entry name" value="CorA soluble domain-like"/>
    <property type="match status" value="1"/>
</dbReference>
<dbReference type="SUPFAM" id="SSF144083">
    <property type="entry name" value="Magnesium transport protein CorA, transmembrane region"/>
    <property type="match status" value="1"/>
</dbReference>
<evidence type="ECO:0000269" key="1">
    <source>
    </source>
</evidence>
<evidence type="ECO:0000303" key="2">
    <source>
    </source>
</evidence>
<evidence type="ECO:0000303" key="3">
    <source>
    </source>
</evidence>
<evidence type="ECO:0000305" key="4"/>
<evidence type="ECO:0000312" key="5">
    <source>
        <dbReference type="EMBL" id="AAD11565.1"/>
    </source>
</evidence>
<evidence type="ECO:0000312" key="6">
    <source>
        <dbReference type="EMBL" id="AAG05162.1"/>
    </source>
</evidence>
<evidence type="ECO:0007744" key="7">
    <source>
        <dbReference type="PDB" id="7NH9"/>
    </source>
</evidence>
<evidence type="ECO:0007829" key="8">
    <source>
        <dbReference type="PDB" id="7NH9"/>
    </source>
</evidence>
<proteinExistence type="evidence at protein level"/>
<gene>
    <name evidence="2 3" type="primary">cmaX</name>
    <name evidence="3" type="synonym">zntB</name>
    <name evidence="6" type="ordered locus">PA1773</name>
</gene>
<accession>Q9ZIH2</accession>
<accession>A0A1S1C048</accession>
<accession>G3XD00</accession>
<accession>Q7DCE5</accession>
<reference evidence="5" key="1">
    <citation type="journal article" date="1999" name="J. Bacteriol.">
        <title>Influence of a putative ECF sigma factor on expression of the major outer membrane protein, OprF, in Pseudomonas aeruginosa and Pseudomonas fluorescens.</title>
        <authorList>
            <person name="Brinkman F.S."/>
            <person name="Schoofs G."/>
            <person name="Hancock R.E."/>
            <person name="De Mot R."/>
        </authorList>
    </citation>
    <scope>NUCLEOTIDE SEQUENCE [GENOMIC DNA]</scope>
    <source>
        <strain>ATCC 15692 / DSM 22644 / CIP 104116 / JCM 14847 / LMG 12228 / 1C / PRS 101 / PAO1</strain>
    </source>
</reference>
<reference evidence="6" key="2">
    <citation type="journal article" date="2000" name="Nature">
        <title>Complete genome sequence of Pseudomonas aeruginosa PAO1, an opportunistic pathogen.</title>
        <authorList>
            <person name="Stover C.K."/>
            <person name="Pham X.-Q.T."/>
            <person name="Erwin A.L."/>
            <person name="Mizoguchi S.D."/>
            <person name="Warrener P."/>
            <person name="Hickey M.J."/>
            <person name="Brinkman F.S.L."/>
            <person name="Hufnagle W.O."/>
            <person name="Kowalik D.J."/>
            <person name="Lagrou M."/>
            <person name="Garber R.L."/>
            <person name="Goltry L."/>
            <person name="Tolentino E."/>
            <person name="Westbrock-Wadman S."/>
            <person name="Yuan Y."/>
            <person name="Brody L.L."/>
            <person name="Coulter S.N."/>
            <person name="Folger K.R."/>
            <person name="Kas A."/>
            <person name="Larbig K."/>
            <person name="Lim R.M."/>
            <person name="Smith K.A."/>
            <person name="Spencer D.H."/>
            <person name="Wong G.K.-S."/>
            <person name="Wu Z."/>
            <person name="Paulsen I.T."/>
            <person name="Reizer J."/>
            <person name="Saier M.H. Jr."/>
            <person name="Hancock R.E.W."/>
            <person name="Lory S."/>
            <person name="Olson M.V."/>
        </authorList>
    </citation>
    <scope>NUCLEOTIDE SEQUENCE [LARGE SCALE GENOMIC DNA]</scope>
    <source>
        <strain>ATCC 15692 / DSM 22644 / CIP 104116 / JCM 14847 / LMG 12228 / 1C / PRS 101 / PAO1</strain>
    </source>
</reference>
<reference evidence="7" key="3">
    <citation type="journal article" date="2021" name="Int. J. Biol. Macromol.">
        <title>Structural and biochemical characterization of a novel ZntB (CmaX) transporter protein from Pseudomonas aeruginosa.</title>
        <authorList>
            <person name="Stetsenko A."/>
            <person name="Stehantsev P."/>
            <person name="Dranenko N.O."/>
            <person name="Gelfand M.S."/>
            <person name="Guskov A."/>
        </authorList>
    </citation>
    <scope>STRUCTURE BY ELECTRON MICROSCOPY (3.03 ANGSTROMS)</scope>
    <scope>FUNCTION</scope>
    <scope>TRANSPORTER ACTIVITY</scope>
    <scope>SUBUNIT</scope>
    <scope>SUBCELLULAR LOCATION</scope>
    <scope>TOPOLOGY</scope>
    <source>
        <strain>ATCC 15692 / DSM 22644 / CIP 104116 / JCM 14847 / LMG 12228 / 1C / PRS 101 / PAO1</strain>
    </source>
</reference>
<protein>
    <recommendedName>
        <fullName evidence="4">Divalent cation transporter CmaX</fullName>
    </recommendedName>
</protein>
<name>CMAX_PSEAE</name>
<organism>
    <name type="scientific">Pseudomonas aeruginosa (strain ATCC 15692 / DSM 22644 / CIP 104116 / JCM 14847 / LMG 12228 / 1C / PRS 101 / PAO1)</name>
    <dbReference type="NCBI Taxonomy" id="208964"/>
    <lineage>
        <taxon>Bacteria</taxon>
        <taxon>Pseudomonadati</taxon>
        <taxon>Pseudomonadota</taxon>
        <taxon>Gammaproteobacteria</taxon>
        <taxon>Pseudomonadales</taxon>
        <taxon>Pseudomonadaceae</taxon>
        <taxon>Pseudomonas</taxon>
    </lineage>
</organism>
<feature type="chain" id="PRO_0000461217" description="Divalent cation transporter CmaX">
    <location>
        <begin position="1"/>
        <end position="332"/>
    </location>
</feature>
<feature type="topological domain" description="Cytoplasmic" evidence="1">
    <location>
        <begin position="1"/>
        <end position="277"/>
    </location>
</feature>
<feature type="transmembrane region" description="Helical" evidence="1 7">
    <location>
        <begin position="278"/>
        <end position="286"/>
    </location>
</feature>
<feature type="topological domain" description="Periplasmic" evidence="1">
    <location>
        <begin position="287"/>
        <end position="307"/>
    </location>
</feature>
<feature type="transmembrane region" description="Helical" evidence="1 7">
    <location>
        <begin position="308"/>
        <end position="323"/>
    </location>
</feature>
<feature type="topological domain" description="Cytoplasmic" evidence="1">
    <location>
        <begin position="324"/>
        <end position="332"/>
    </location>
</feature>
<feature type="strand" evidence="8">
    <location>
        <begin position="10"/>
        <end position="17"/>
    </location>
</feature>
<feature type="strand" evidence="8">
    <location>
        <begin position="20"/>
        <end position="22"/>
    </location>
</feature>
<feature type="strand" evidence="8">
    <location>
        <begin position="43"/>
        <end position="51"/>
    </location>
</feature>
<feature type="helix" evidence="8">
    <location>
        <begin position="52"/>
        <end position="59"/>
    </location>
</feature>
<feature type="helix" evidence="8">
    <location>
        <begin position="66"/>
        <end position="72"/>
    </location>
</feature>
<feature type="strand" evidence="8">
    <location>
        <begin position="81"/>
        <end position="83"/>
    </location>
</feature>
<feature type="strand" evidence="8">
    <location>
        <begin position="85"/>
        <end position="87"/>
    </location>
</feature>
<feature type="strand" evidence="8">
    <location>
        <begin position="89"/>
        <end position="94"/>
    </location>
</feature>
<feature type="strand" evidence="8">
    <location>
        <begin position="100"/>
        <end position="102"/>
    </location>
</feature>
<feature type="strand" evidence="8">
    <location>
        <begin position="104"/>
        <end position="106"/>
    </location>
</feature>
<feature type="strand" evidence="8">
    <location>
        <begin position="109"/>
        <end position="114"/>
    </location>
</feature>
<feature type="strand" evidence="8">
    <location>
        <begin position="119"/>
        <end position="125"/>
    </location>
</feature>
<feature type="helix" evidence="8">
    <location>
        <begin position="128"/>
        <end position="138"/>
    </location>
</feature>
<feature type="turn" evidence="8">
    <location>
        <begin position="139"/>
        <end position="141"/>
    </location>
</feature>
<feature type="helix" evidence="8">
    <location>
        <begin position="146"/>
        <end position="181"/>
    </location>
</feature>
<feature type="strand" evidence="8">
    <location>
        <begin position="182"/>
        <end position="184"/>
    </location>
</feature>
<feature type="turn" evidence="8">
    <location>
        <begin position="189"/>
        <end position="191"/>
    </location>
</feature>
<feature type="helix" evidence="8">
    <location>
        <begin position="192"/>
        <end position="218"/>
    </location>
</feature>
<feature type="turn" evidence="8">
    <location>
        <begin position="221"/>
        <end position="223"/>
    </location>
</feature>
<feature type="helix" evidence="8">
    <location>
        <begin position="226"/>
        <end position="228"/>
    </location>
</feature>
<feature type="helix" evidence="8">
    <location>
        <begin position="229"/>
        <end position="288"/>
    </location>
</feature>
<feature type="strand" evidence="8">
    <location>
        <begin position="295"/>
        <end position="297"/>
    </location>
</feature>
<feature type="turn" evidence="8">
    <location>
        <begin position="308"/>
        <end position="313"/>
    </location>
</feature>
<feature type="helix" evidence="8">
    <location>
        <begin position="314"/>
        <end position="330"/>
    </location>
</feature>
<comment type="function">
    <text evidence="1">Transports divalent cations including Zn(2+), Cd(2+), Ni(2+) and Co(2+) (PubMed:34175341). The proton gradient has a small influence on transport suggesting that the transport is probably not proton-dependent (PubMed:34175341).</text>
</comment>
<comment type="catalytic activity">
    <reaction evidence="1">
        <text>Zn(2+)(in) = Zn(2+)(out)</text>
        <dbReference type="Rhea" id="RHEA:29351"/>
        <dbReference type="ChEBI" id="CHEBI:29105"/>
    </reaction>
</comment>
<comment type="catalytic activity">
    <reaction evidence="1">
        <text>Cd(2+)(in) = Cd(2+)(out)</text>
        <dbReference type="Rhea" id="RHEA:28707"/>
        <dbReference type="ChEBI" id="CHEBI:48775"/>
    </reaction>
</comment>
<comment type="catalytic activity">
    <reaction evidence="1">
        <text>Ni(2+)(in) = Ni(2+)(out)</text>
        <dbReference type="Rhea" id="RHEA:29831"/>
        <dbReference type="ChEBI" id="CHEBI:49786"/>
    </reaction>
</comment>
<comment type="catalytic activity">
    <reaction evidence="1">
        <text>Co(2+)(in) = Co(2+)(out)</text>
        <dbReference type="Rhea" id="RHEA:28578"/>
        <dbReference type="ChEBI" id="CHEBI:48828"/>
    </reaction>
</comment>
<comment type="subunit">
    <text evidence="1">Homopentamer.</text>
</comment>
<comment type="subcellular location">
    <subcellularLocation>
        <location evidence="1">Cell inner membrane</location>
        <topology evidence="1">Multi-pass membrane protein</topology>
    </subcellularLocation>
</comment>
<comment type="similarity">
    <text evidence="4">Belongs to the CorA metal ion transporter (MIT) (TC 1.A.35) family.</text>
</comment>